<feature type="signal peptide" evidence="1">
    <location>
        <begin position="1"/>
        <end position="19"/>
    </location>
</feature>
<feature type="chain" id="PRO_0000036753" description="Uncharacterized 6.4 kDa protein in GP41-PNK intergenic region">
    <location>
        <begin position="20"/>
        <end position="53"/>
    </location>
</feature>
<organism>
    <name type="scientific">Autographa californica nuclear polyhedrosis virus</name>
    <name type="common">AcMNPV</name>
    <dbReference type="NCBI Taxonomy" id="46015"/>
    <lineage>
        <taxon>Viruses</taxon>
        <taxon>Viruses incertae sedis</taxon>
        <taxon>Naldaviricetes</taxon>
        <taxon>Lefavirales</taxon>
        <taxon>Baculoviridae</taxon>
        <taxon>Alphabaculovirus</taxon>
        <taxon>Alphabaculovirus aucalifornicae</taxon>
    </lineage>
</organism>
<dbReference type="EMBL" id="L22858">
    <property type="protein sequence ID" value="AAA66715.1"/>
    <property type="molecule type" value="Genomic_DNA"/>
</dbReference>
<dbReference type="PIR" id="F72860">
    <property type="entry name" value="F72860"/>
</dbReference>
<dbReference type="RefSeq" id="NP_054115.1">
    <property type="nucleotide sequence ID" value="NC_001623.1"/>
</dbReference>
<dbReference type="GeneID" id="1403918"/>
<dbReference type="KEGG" id="vg:1403918"/>
<dbReference type="OrthoDB" id="39176at10239"/>
<dbReference type="Proteomes" id="UP000008292">
    <property type="component" value="Segment"/>
</dbReference>
<keyword id="KW-1185">Reference proteome</keyword>
<keyword id="KW-0732">Signal</keyword>
<proteinExistence type="inferred from homology"/>
<protein>
    <recommendedName>
        <fullName>Uncharacterized 6.4 kDa protein in GP41-PNK intergenic region</fullName>
    </recommendedName>
</protein>
<organismHost>
    <name type="scientific">Lepidoptera</name>
    <name type="common">butterflies and moths</name>
    <dbReference type="NCBI Taxonomy" id="7088"/>
</organismHost>
<reference key="1">
    <citation type="journal article" date="1994" name="Virology">
        <title>The complete DNA sequence of Autographa californica nuclear polyhedrosis virus.</title>
        <authorList>
            <person name="Ayres M.D."/>
            <person name="Howard S.C."/>
            <person name="Kuzio J."/>
            <person name="Lopez-Ferber M."/>
            <person name="Possee R.D."/>
        </authorList>
    </citation>
    <scope>NUCLEOTIDE SEQUENCE [LARGE SCALE GENOMIC DNA]</scope>
    <source>
        <strain>C6</strain>
    </source>
</reference>
<accession>P41475</accession>
<sequence length="53" mass="6367">MKLLTILILFYSFFMNLQALPDYHQANRCVLLGTRIGWNDDNSQDPNVYWKWC</sequence>
<evidence type="ECO:0000255" key="1"/>
<name>Y085_NPVAC</name>